<gene>
    <name type="primary">uba3</name>
    <name type="ORF">SPAC24H6.12c</name>
</gene>
<evidence type="ECO:0000250" key="1"/>
<evidence type="ECO:0000255" key="2">
    <source>
        <dbReference type="PROSITE-ProRule" id="PRU10132"/>
    </source>
</evidence>
<evidence type="ECO:0000269" key="3">
    <source>
    </source>
</evidence>
<evidence type="ECO:0000305" key="4"/>
<comment type="function">
    <text evidence="1">Catalytic subunit of the dimeric uba3-ula1 E1 enzyme. E1 activates NEDD8/ubl1 by first adenylating its C-terminal glycine residue with ATP, thereafter linking this residue to the side chain of the catalytic cysteine, yielding a NEDD8-uba3 thioester and free AMP. E1 finally transfers NEDD8 to the catalytic cysteine of ubc12 (By similarity).</text>
</comment>
<comment type="catalytic activity">
    <reaction>
        <text>ATP + [NEDD8 protein] + [E1 NEDD8-activating enzyme]-L-cysteine = AMP + diphosphate + [E1 NEDD8-activating enzyme]-S-[NEDD8 protein]-yl-L-cysteine.</text>
        <dbReference type="EC" id="6.2.1.64"/>
    </reaction>
</comment>
<comment type="pathway">
    <text>Protein modification; protein neddylation.</text>
</comment>
<comment type="subunit">
    <text evidence="1 3">Heterodimer of uba3 and ula1. Interacts with NEDD8 and ubc12 (By similarity). Interacts with but1 and but2.</text>
</comment>
<comment type="similarity">
    <text evidence="4">Belongs to the ubiquitin-activating E1 family. UBA3 subfamily.</text>
</comment>
<name>UBA3_SCHPO</name>
<proteinExistence type="evidence at protein level"/>
<accession>Q09765</accession>
<feature type="chain" id="PRO_0000194949" description="NEDD8-activating enzyme E1 catalytic subunit">
    <location>
        <begin position="1"/>
        <end position="444"/>
    </location>
</feature>
<feature type="active site" description="Glycyl thioester intermediate" evidence="2">
    <location>
        <position position="205"/>
    </location>
</feature>
<feature type="binding site" evidence="1">
    <location>
        <begin position="54"/>
        <end position="78"/>
    </location>
    <ligand>
        <name>ATP</name>
        <dbReference type="ChEBI" id="CHEBI:30616"/>
    </ligand>
</feature>
<organism>
    <name type="scientific">Schizosaccharomyces pombe (strain 972 / ATCC 24843)</name>
    <name type="common">Fission yeast</name>
    <dbReference type="NCBI Taxonomy" id="284812"/>
    <lineage>
        <taxon>Eukaryota</taxon>
        <taxon>Fungi</taxon>
        <taxon>Dikarya</taxon>
        <taxon>Ascomycota</taxon>
        <taxon>Taphrinomycotina</taxon>
        <taxon>Schizosaccharomycetes</taxon>
        <taxon>Schizosaccharomycetales</taxon>
        <taxon>Schizosaccharomycetaceae</taxon>
        <taxon>Schizosaccharomyces</taxon>
    </lineage>
</organism>
<sequence>MPSSDVCKAGSHRHSGWIQSLKKPGPFNLDAPENPEETLKSAFSSKILIIGAGGLGCEILKDLALSGFRDLSVIDMDTIDITNLNRQFLFNESNIDEPKANVAASMIMKRIPSTVVTPFYGKIQDKTIEFYKEFKLIICGLDSVEARRWINSTLVAIAKTGDLIPLVDGGSEGLKGQARVIIPTITSCYECSLDMLTPKISYPICTLANTPRLPEHCVEWAYLLEWPRVFLNASVDSFSKQEVFEPLDGKNSNFEPDNIRHIDWLVKRSIERANKFQIPSSSINRFFVQGIVKRIIPAVASTNAIIAASCCNEALKILTESNPFLDNYMMYVGEDGAYTYTFNLEKRSDCPVCGVLSEVYDISASSTVTLKDILNHYSKSYNLQNPSVSTAAGTPLYLASPPALQVATSKNLSQPILSITSVDVNLVITDKNLSTSLSVQLREC</sequence>
<keyword id="KW-0067">ATP-binding</keyword>
<keyword id="KW-0436">Ligase</keyword>
<keyword id="KW-0547">Nucleotide-binding</keyword>
<keyword id="KW-1185">Reference proteome</keyword>
<keyword id="KW-0833">Ubl conjugation pathway</keyword>
<protein>
    <recommendedName>
        <fullName>NEDD8-activating enzyme E1 catalytic subunit</fullName>
        <ecNumber>6.2.1.64</ecNumber>
    </recommendedName>
    <alternativeName>
        <fullName>Ubiquitin-activating enzyme E1 3</fullName>
    </alternativeName>
</protein>
<reference key="1">
    <citation type="journal article" date="2002" name="Nature">
        <title>The genome sequence of Schizosaccharomyces pombe.</title>
        <authorList>
            <person name="Wood V."/>
            <person name="Gwilliam R."/>
            <person name="Rajandream M.A."/>
            <person name="Lyne M.H."/>
            <person name="Lyne R."/>
            <person name="Stewart A."/>
            <person name="Sgouros J.G."/>
            <person name="Peat N."/>
            <person name="Hayles J."/>
            <person name="Baker S.G."/>
            <person name="Basham D."/>
            <person name="Bowman S."/>
            <person name="Brooks K."/>
            <person name="Brown D."/>
            <person name="Brown S."/>
            <person name="Chillingworth T."/>
            <person name="Churcher C.M."/>
            <person name="Collins M."/>
            <person name="Connor R."/>
            <person name="Cronin A."/>
            <person name="Davis P."/>
            <person name="Feltwell T."/>
            <person name="Fraser A."/>
            <person name="Gentles S."/>
            <person name="Goble A."/>
            <person name="Hamlin N."/>
            <person name="Harris D.E."/>
            <person name="Hidalgo J."/>
            <person name="Hodgson G."/>
            <person name="Holroyd S."/>
            <person name="Hornsby T."/>
            <person name="Howarth S."/>
            <person name="Huckle E.J."/>
            <person name="Hunt S."/>
            <person name="Jagels K."/>
            <person name="James K.D."/>
            <person name="Jones L."/>
            <person name="Jones M."/>
            <person name="Leather S."/>
            <person name="McDonald S."/>
            <person name="McLean J."/>
            <person name="Mooney P."/>
            <person name="Moule S."/>
            <person name="Mungall K.L."/>
            <person name="Murphy L.D."/>
            <person name="Niblett D."/>
            <person name="Odell C."/>
            <person name="Oliver K."/>
            <person name="O'Neil S."/>
            <person name="Pearson D."/>
            <person name="Quail M.A."/>
            <person name="Rabbinowitsch E."/>
            <person name="Rutherford K.M."/>
            <person name="Rutter S."/>
            <person name="Saunders D."/>
            <person name="Seeger K."/>
            <person name="Sharp S."/>
            <person name="Skelton J."/>
            <person name="Simmonds M.N."/>
            <person name="Squares R."/>
            <person name="Squares S."/>
            <person name="Stevens K."/>
            <person name="Taylor K."/>
            <person name="Taylor R.G."/>
            <person name="Tivey A."/>
            <person name="Walsh S.V."/>
            <person name="Warren T."/>
            <person name="Whitehead S."/>
            <person name="Woodward J.R."/>
            <person name="Volckaert G."/>
            <person name="Aert R."/>
            <person name="Robben J."/>
            <person name="Grymonprez B."/>
            <person name="Weltjens I."/>
            <person name="Vanstreels E."/>
            <person name="Rieger M."/>
            <person name="Schaefer M."/>
            <person name="Mueller-Auer S."/>
            <person name="Gabel C."/>
            <person name="Fuchs M."/>
            <person name="Duesterhoeft A."/>
            <person name="Fritzc C."/>
            <person name="Holzer E."/>
            <person name="Moestl D."/>
            <person name="Hilbert H."/>
            <person name="Borzym K."/>
            <person name="Langer I."/>
            <person name="Beck A."/>
            <person name="Lehrach H."/>
            <person name="Reinhardt R."/>
            <person name="Pohl T.M."/>
            <person name="Eger P."/>
            <person name="Zimmermann W."/>
            <person name="Wedler H."/>
            <person name="Wambutt R."/>
            <person name="Purnelle B."/>
            <person name="Goffeau A."/>
            <person name="Cadieu E."/>
            <person name="Dreano S."/>
            <person name="Gloux S."/>
            <person name="Lelaure V."/>
            <person name="Mottier S."/>
            <person name="Galibert F."/>
            <person name="Aves S.J."/>
            <person name="Xiang Z."/>
            <person name="Hunt C."/>
            <person name="Moore K."/>
            <person name="Hurst S.M."/>
            <person name="Lucas M."/>
            <person name="Rochet M."/>
            <person name="Gaillardin C."/>
            <person name="Tallada V.A."/>
            <person name="Garzon A."/>
            <person name="Thode G."/>
            <person name="Daga R.R."/>
            <person name="Cruzado L."/>
            <person name="Jimenez J."/>
            <person name="Sanchez M."/>
            <person name="del Rey F."/>
            <person name="Benito J."/>
            <person name="Dominguez A."/>
            <person name="Revuelta J.L."/>
            <person name="Moreno S."/>
            <person name="Armstrong J."/>
            <person name="Forsburg S.L."/>
            <person name="Cerutti L."/>
            <person name="Lowe T."/>
            <person name="McCombie W.R."/>
            <person name="Paulsen I."/>
            <person name="Potashkin J."/>
            <person name="Shpakovski G.V."/>
            <person name="Ussery D."/>
            <person name="Barrell B.G."/>
            <person name="Nurse P."/>
        </authorList>
    </citation>
    <scope>NUCLEOTIDE SEQUENCE [LARGE SCALE GENOMIC DNA]</scope>
    <source>
        <strain>972 / ATCC 24843</strain>
    </source>
</reference>
<reference key="2">
    <citation type="journal article" date="2003" name="Biochem. Biophys. Res. Commun.">
        <title>But1 and But2 proteins bind to Uba3, a catalytic subunit of E1 for neddylation, in fission yeast.</title>
        <authorList>
            <person name="Yashiroda H."/>
            <person name="Tanaka K."/>
        </authorList>
    </citation>
    <scope>INTERACTION WITH BUT1 AND BUT2</scope>
</reference>
<dbReference type="EC" id="6.2.1.64"/>
<dbReference type="EMBL" id="CU329670">
    <property type="protein sequence ID" value="CAA90856.1"/>
    <property type="molecule type" value="Genomic_DNA"/>
</dbReference>
<dbReference type="PIR" id="T38368">
    <property type="entry name" value="S62414"/>
</dbReference>
<dbReference type="RefSeq" id="NP_592940.1">
    <property type="nucleotide sequence ID" value="NM_001018341.2"/>
</dbReference>
<dbReference type="SMR" id="Q09765"/>
<dbReference type="BioGRID" id="278575">
    <property type="interactions" value="5"/>
</dbReference>
<dbReference type="FunCoup" id="Q09765">
    <property type="interactions" value="1214"/>
</dbReference>
<dbReference type="STRING" id="284812.Q09765"/>
<dbReference type="iPTMnet" id="Q09765"/>
<dbReference type="PaxDb" id="4896-SPAC24H6.12c.1"/>
<dbReference type="EnsemblFungi" id="SPAC24H6.12c.1">
    <property type="protein sequence ID" value="SPAC24H6.12c.1:pep"/>
    <property type="gene ID" value="SPAC24H6.12c"/>
</dbReference>
<dbReference type="GeneID" id="2542099"/>
<dbReference type="KEGG" id="spo:2542099"/>
<dbReference type="PomBase" id="SPAC24H6.12c">
    <property type="gene designation" value="uba3"/>
</dbReference>
<dbReference type="VEuPathDB" id="FungiDB:SPAC24H6.12c"/>
<dbReference type="eggNOG" id="KOG2015">
    <property type="taxonomic scope" value="Eukaryota"/>
</dbReference>
<dbReference type="HOGENOM" id="CLU_013325_13_1_1"/>
<dbReference type="InParanoid" id="Q09765"/>
<dbReference type="OMA" id="PYLENYM"/>
<dbReference type="PhylomeDB" id="Q09765"/>
<dbReference type="Reactome" id="R-SPO-8951664">
    <property type="pathway name" value="Neddylation"/>
</dbReference>
<dbReference type="Reactome" id="R-SPO-983168">
    <property type="pathway name" value="Antigen processing: Ubiquitination &amp; Proteasome degradation"/>
</dbReference>
<dbReference type="UniPathway" id="UPA00885"/>
<dbReference type="PRO" id="PR:Q09765"/>
<dbReference type="Proteomes" id="UP000002485">
    <property type="component" value="Chromosome I"/>
</dbReference>
<dbReference type="GO" id="GO:0005737">
    <property type="term" value="C:cytoplasm"/>
    <property type="evidence" value="ECO:0000318"/>
    <property type="project" value="GO_Central"/>
</dbReference>
<dbReference type="GO" id="GO:0005829">
    <property type="term" value="C:cytosol"/>
    <property type="evidence" value="ECO:0007005"/>
    <property type="project" value="PomBase"/>
</dbReference>
<dbReference type="GO" id="GO:0005634">
    <property type="term" value="C:nucleus"/>
    <property type="evidence" value="ECO:0007005"/>
    <property type="project" value="PomBase"/>
</dbReference>
<dbReference type="GO" id="GO:0005524">
    <property type="term" value="F:ATP binding"/>
    <property type="evidence" value="ECO:0007669"/>
    <property type="project" value="UniProtKB-KW"/>
</dbReference>
<dbReference type="GO" id="GO:0016887">
    <property type="term" value="F:ATP hydrolysis activity"/>
    <property type="evidence" value="ECO:0000305"/>
    <property type="project" value="PomBase"/>
</dbReference>
<dbReference type="GO" id="GO:0019781">
    <property type="term" value="F:NEDD8 activating enzyme activity"/>
    <property type="evidence" value="ECO:0000318"/>
    <property type="project" value="GO_Central"/>
</dbReference>
<dbReference type="GO" id="GO:0045116">
    <property type="term" value="P:protein neddylation"/>
    <property type="evidence" value="ECO:0000318"/>
    <property type="project" value="GO_Central"/>
</dbReference>
<dbReference type="CDD" id="cd01488">
    <property type="entry name" value="Uba3_RUB"/>
    <property type="match status" value="1"/>
</dbReference>
<dbReference type="FunFam" id="1.10.10.520:FF:000009">
    <property type="entry name" value="Ubiquitin activating enzyme, putative"/>
    <property type="match status" value="1"/>
</dbReference>
<dbReference type="Gene3D" id="3.40.50.720">
    <property type="entry name" value="NAD(P)-binding Rossmann-like Domain"/>
    <property type="match status" value="1"/>
</dbReference>
<dbReference type="Gene3D" id="1.10.10.520">
    <property type="entry name" value="Ubiquitin activating enzymes (Uba3). Chain: B, domain 2"/>
    <property type="match status" value="1"/>
</dbReference>
<dbReference type="Gene3D" id="3.10.290.20">
    <property type="entry name" value="Ubiquitin-like 2 activating enzyme e1b. Chain: B, domain 3"/>
    <property type="match status" value="1"/>
</dbReference>
<dbReference type="InterPro" id="IPR014929">
    <property type="entry name" value="E2-binding"/>
</dbReference>
<dbReference type="InterPro" id="IPR045886">
    <property type="entry name" value="ThiF/MoeB/HesA"/>
</dbReference>
<dbReference type="InterPro" id="IPR000594">
    <property type="entry name" value="ThiF_NAD_FAD-bd"/>
</dbReference>
<dbReference type="InterPro" id="IPR023318">
    <property type="entry name" value="Ub_act_enz_dom_a_sf"/>
</dbReference>
<dbReference type="InterPro" id="IPR030468">
    <property type="entry name" value="Uba3_N"/>
</dbReference>
<dbReference type="InterPro" id="IPR035985">
    <property type="entry name" value="Ubiquitin-activating_enz"/>
</dbReference>
<dbReference type="InterPro" id="IPR033127">
    <property type="entry name" value="UBQ-activ_enz_E1_Cys_AS"/>
</dbReference>
<dbReference type="PANTHER" id="PTHR10953:SF6">
    <property type="entry name" value="NEDD8-ACTIVATING ENZYME E1 CATALYTIC SUBUNIT"/>
    <property type="match status" value="1"/>
</dbReference>
<dbReference type="PANTHER" id="PTHR10953">
    <property type="entry name" value="UBIQUITIN-ACTIVATING ENZYME E1"/>
    <property type="match status" value="1"/>
</dbReference>
<dbReference type="Pfam" id="PF08825">
    <property type="entry name" value="E2_bind"/>
    <property type="match status" value="1"/>
</dbReference>
<dbReference type="Pfam" id="PF00899">
    <property type="entry name" value="ThiF"/>
    <property type="match status" value="1"/>
</dbReference>
<dbReference type="SMART" id="SM01181">
    <property type="entry name" value="E2_bind"/>
    <property type="match status" value="1"/>
</dbReference>
<dbReference type="SUPFAM" id="SSF69572">
    <property type="entry name" value="Activating enzymes of the ubiquitin-like proteins"/>
    <property type="match status" value="1"/>
</dbReference>
<dbReference type="PROSITE" id="PS00865">
    <property type="entry name" value="UBIQUITIN_ACTIVAT_2"/>
    <property type="match status" value="1"/>
</dbReference>